<name>SYS_EXIS2</name>
<accession>B1YGC4</accession>
<keyword id="KW-0030">Aminoacyl-tRNA synthetase</keyword>
<keyword id="KW-0067">ATP-binding</keyword>
<keyword id="KW-0963">Cytoplasm</keyword>
<keyword id="KW-0436">Ligase</keyword>
<keyword id="KW-0547">Nucleotide-binding</keyword>
<keyword id="KW-0648">Protein biosynthesis</keyword>
<keyword id="KW-1185">Reference proteome</keyword>
<evidence type="ECO:0000255" key="1">
    <source>
        <dbReference type="HAMAP-Rule" id="MF_00176"/>
    </source>
</evidence>
<dbReference type="EC" id="6.1.1.11" evidence="1"/>
<dbReference type="EMBL" id="CP001022">
    <property type="protein sequence ID" value="ACB59501.1"/>
    <property type="molecule type" value="Genomic_DNA"/>
</dbReference>
<dbReference type="RefSeq" id="WP_012368927.1">
    <property type="nucleotide sequence ID" value="NC_010556.1"/>
</dbReference>
<dbReference type="SMR" id="B1YGC4"/>
<dbReference type="STRING" id="262543.Exig_0013"/>
<dbReference type="KEGG" id="esi:Exig_0013"/>
<dbReference type="eggNOG" id="COG0172">
    <property type="taxonomic scope" value="Bacteria"/>
</dbReference>
<dbReference type="HOGENOM" id="CLU_023797_1_1_9"/>
<dbReference type="OrthoDB" id="9804647at2"/>
<dbReference type="UniPathway" id="UPA00906">
    <property type="reaction ID" value="UER00895"/>
</dbReference>
<dbReference type="Proteomes" id="UP000001681">
    <property type="component" value="Chromosome"/>
</dbReference>
<dbReference type="GO" id="GO:0005737">
    <property type="term" value="C:cytoplasm"/>
    <property type="evidence" value="ECO:0007669"/>
    <property type="project" value="UniProtKB-SubCell"/>
</dbReference>
<dbReference type="GO" id="GO:0005524">
    <property type="term" value="F:ATP binding"/>
    <property type="evidence" value="ECO:0007669"/>
    <property type="project" value="UniProtKB-UniRule"/>
</dbReference>
<dbReference type="GO" id="GO:0140096">
    <property type="term" value="F:catalytic activity, acting on a protein"/>
    <property type="evidence" value="ECO:0007669"/>
    <property type="project" value="UniProtKB-ARBA"/>
</dbReference>
<dbReference type="GO" id="GO:0004828">
    <property type="term" value="F:serine-tRNA ligase activity"/>
    <property type="evidence" value="ECO:0007669"/>
    <property type="project" value="UniProtKB-UniRule"/>
</dbReference>
<dbReference type="GO" id="GO:0016740">
    <property type="term" value="F:transferase activity"/>
    <property type="evidence" value="ECO:0007669"/>
    <property type="project" value="UniProtKB-ARBA"/>
</dbReference>
<dbReference type="GO" id="GO:0016260">
    <property type="term" value="P:selenocysteine biosynthetic process"/>
    <property type="evidence" value="ECO:0007669"/>
    <property type="project" value="UniProtKB-UniRule"/>
</dbReference>
<dbReference type="GO" id="GO:0006434">
    <property type="term" value="P:seryl-tRNA aminoacylation"/>
    <property type="evidence" value="ECO:0007669"/>
    <property type="project" value="UniProtKB-UniRule"/>
</dbReference>
<dbReference type="CDD" id="cd00770">
    <property type="entry name" value="SerRS_core"/>
    <property type="match status" value="1"/>
</dbReference>
<dbReference type="Gene3D" id="3.30.930.10">
    <property type="entry name" value="Bira Bifunctional Protein, Domain 2"/>
    <property type="match status" value="1"/>
</dbReference>
<dbReference type="Gene3D" id="1.10.287.40">
    <property type="entry name" value="Serine-tRNA synthetase, tRNA binding domain"/>
    <property type="match status" value="1"/>
</dbReference>
<dbReference type="HAMAP" id="MF_00176">
    <property type="entry name" value="Ser_tRNA_synth_type1"/>
    <property type="match status" value="1"/>
</dbReference>
<dbReference type="InterPro" id="IPR002314">
    <property type="entry name" value="aa-tRNA-synt_IIb"/>
</dbReference>
<dbReference type="InterPro" id="IPR006195">
    <property type="entry name" value="aa-tRNA-synth_II"/>
</dbReference>
<dbReference type="InterPro" id="IPR045864">
    <property type="entry name" value="aa-tRNA-synth_II/BPL/LPL"/>
</dbReference>
<dbReference type="InterPro" id="IPR002317">
    <property type="entry name" value="Ser-tRNA-ligase_type_1"/>
</dbReference>
<dbReference type="InterPro" id="IPR015866">
    <property type="entry name" value="Ser-tRNA-synth_1_N"/>
</dbReference>
<dbReference type="InterPro" id="IPR042103">
    <property type="entry name" value="SerRS_1_N_sf"/>
</dbReference>
<dbReference type="InterPro" id="IPR033729">
    <property type="entry name" value="SerRS_core"/>
</dbReference>
<dbReference type="InterPro" id="IPR010978">
    <property type="entry name" value="tRNA-bd_arm"/>
</dbReference>
<dbReference type="NCBIfam" id="TIGR00414">
    <property type="entry name" value="serS"/>
    <property type="match status" value="1"/>
</dbReference>
<dbReference type="PANTHER" id="PTHR43697:SF1">
    <property type="entry name" value="SERINE--TRNA LIGASE"/>
    <property type="match status" value="1"/>
</dbReference>
<dbReference type="PANTHER" id="PTHR43697">
    <property type="entry name" value="SERYL-TRNA SYNTHETASE"/>
    <property type="match status" value="1"/>
</dbReference>
<dbReference type="Pfam" id="PF02403">
    <property type="entry name" value="Seryl_tRNA_N"/>
    <property type="match status" value="1"/>
</dbReference>
<dbReference type="Pfam" id="PF00587">
    <property type="entry name" value="tRNA-synt_2b"/>
    <property type="match status" value="1"/>
</dbReference>
<dbReference type="PIRSF" id="PIRSF001529">
    <property type="entry name" value="Ser-tRNA-synth_IIa"/>
    <property type="match status" value="1"/>
</dbReference>
<dbReference type="PRINTS" id="PR00981">
    <property type="entry name" value="TRNASYNTHSER"/>
</dbReference>
<dbReference type="SUPFAM" id="SSF55681">
    <property type="entry name" value="Class II aaRS and biotin synthetases"/>
    <property type="match status" value="1"/>
</dbReference>
<dbReference type="SUPFAM" id="SSF46589">
    <property type="entry name" value="tRNA-binding arm"/>
    <property type="match status" value="1"/>
</dbReference>
<dbReference type="PROSITE" id="PS50862">
    <property type="entry name" value="AA_TRNA_LIGASE_II"/>
    <property type="match status" value="1"/>
</dbReference>
<gene>
    <name evidence="1" type="primary">serS</name>
    <name type="ordered locus">Exig_0013</name>
</gene>
<organism>
    <name type="scientific">Exiguobacterium sibiricum (strain DSM 17290 / CCUG 55495 / CIP 109462 / JCM 13490 / 255-15)</name>
    <dbReference type="NCBI Taxonomy" id="262543"/>
    <lineage>
        <taxon>Bacteria</taxon>
        <taxon>Bacillati</taxon>
        <taxon>Bacillota</taxon>
        <taxon>Bacilli</taxon>
        <taxon>Bacillales</taxon>
        <taxon>Bacillales Family XII. Incertae Sedis</taxon>
        <taxon>Exiguobacterium</taxon>
    </lineage>
</organism>
<reference key="1">
    <citation type="submission" date="2008-04" db="EMBL/GenBank/DDBJ databases">
        <title>Complete sequence of chromosome of Exiguobacterium sibiricum 255-15.</title>
        <authorList>
            <consortium name="US DOE Joint Genome Institute"/>
            <person name="Copeland A."/>
            <person name="Lucas S."/>
            <person name="Lapidus A."/>
            <person name="Glavina del Rio T."/>
            <person name="Dalin E."/>
            <person name="Tice H."/>
            <person name="Bruce D."/>
            <person name="Goodwin L."/>
            <person name="Pitluck S."/>
            <person name="Kiss H."/>
            <person name="Chertkov O."/>
            <person name="Monk C."/>
            <person name="Brettin T."/>
            <person name="Detter J.C."/>
            <person name="Han C."/>
            <person name="Kuske C.R."/>
            <person name="Schmutz J."/>
            <person name="Larimer F."/>
            <person name="Land M."/>
            <person name="Hauser L."/>
            <person name="Kyrpides N."/>
            <person name="Mikhailova N."/>
            <person name="Vishnivetskaya T."/>
            <person name="Rodrigues D.F."/>
            <person name="Gilichinsky D."/>
            <person name="Tiedje J."/>
            <person name="Richardson P."/>
        </authorList>
    </citation>
    <scope>NUCLEOTIDE SEQUENCE [LARGE SCALE GENOMIC DNA]</scope>
    <source>
        <strain>DSM 17290 / CCUG 55495 / CIP 109462 / JCM 13490 / 255-15</strain>
    </source>
</reference>
<comment type="function">
    <text evidence="1">Catalyzes the attachment of serine to tRNA(Ser). Is also able to aminoacylate tRNA(Sec) with serine, to form the misacylated tRNA L-seryl-tRNA(Sec), which will be further converted into selenocysteinyl-tRNA(Sec).</text>
</comment>
<comment type="catalytic activity">
    <reaction evidence="1">
        <text>tRNA(Ser) + L-serine + ATP = L-seryl-tRNA(Ser) + AMP + diphosphate + H(+)</text>
        <dbReference type="Rhea" id="RHEA:12292"/>
        <dbReference type="Rhea" id="RHEA-COMP:9669"/>
        <dbReference type="Rhea" id="RHEA-COMP:9703"/>
        <dbReference type="ChEBI" id="CHEBI:15378"/>
        <dbReference type="ChEBI" id="CHEBI:30616"/>
        <dbReference type="ChEBI" id="CHEBI:33019"/>
        <dbReference type="ChEBI" id="CHEBI:33384"/>
        <dbReference type="ChEBI" id="CHEBI:78442"/>
        <dbReference type="ChEBI" id="CHEBI:78533"/>
        <dbReference type="ChEBI" id="CHEBI:456215"/>
        <dbReference type="EC" id="6.1.1.11"/>
    </reaction>
</comment>
<comment type="catalytic activity">
    <reaction evidence="1">
        <text>tRNA(Sec) + L-serine + ATP = L-seryl-tRNA(Sec) + AMP + diphosphate + H(+)</text>
        <dbReference type="Rhea" id="RHEA:42580"/>
        <dbReference type="Rhea" id="RHEA-COMP:9742"/>
        <dbReference type="Rhea" id="RHEA-COMP:10128"/>
        <dbReference type="ChEBI" id="CHEBI:15378"/>
        <dbReference type="ChEBI" id="CHEBI:30616"/>
        <dbReference type="ChEBI" id="CHEBI:33019"/>
        <dbReference type="ChEBI" id="CHEBI:33384"/>
        <dbReference type="ChEBI" id="CHEBI:78442"/>
        <dbReference type="ChEBI" id="CHEBI:78533"/>
        <dbReference type="ChEBI" id="CHEBI:456215"/>
        <dbReference type="EC" id="6.1.1.11"/>
    </reaction>
</comment>
<comment type="pathway">
    <text evidence="1">Aminoacyl-tRNA biosynthesis; selenocysteinyl-tRNA(Sec) biosynthesis; L-seryl-tRNA(Sec) from L-serine and tRNA(Sec): step 1/1.</text>
</comment>
<comment type="subunit">
    <text evidence="1">Homodimer. The tRNA molecule binds across the dimer.</text>
</comment>
<comment type="subcellular location">
    <subcellularLocation>
        <location evidence="1">Cytoplasm</location>
    </subcellularLocation>
</comment>
<comment type="domain">
    <text evidence="1">Consists of two distinct domains, a catalytic core and a N-terminal extension that is involved in tRNA binding.</text>
</comment>
<comment type="similarity">
    <text evidence="1">Belongs to the class-II aminoacyl-tRNA synthetase family. Type-1 seryl-tRNA synthetase subfamily.</text>
</comment>
<protein>
    <recommendedName>
        <fullName evidence="1">Serine--tRNA ligase</fullName>
        <ecNumber evidence="1">6.1.1.11</ecNumber>
    </recommendedName>
    <alternativeName>
        <fullName evidence="1">Seryl-tRNA synthetase</fullName>
        <shortName evidence="1">SerRS</shortName>
    </alternativeName>
    <alternativeName>
        <fullName evidence="1">Seryl-tRNA(Ser/Sec) synthetase</fullName>
    </alternativeName>
</protein>
<proteinExistence type="inferred from homology"/>
<sequence>MIDIKRLRQDFDAIQEKLAHRGEDLTDMNRFIALDEKRRELIAKTEVLKAERNEATKKIAELKRNKENADEAIAAMRQVGDEVKALDEELREVEATLNLLLLGIPNIPHDSVPIGSTEDDNVVIREVGDKPAFDFEAVPHWDLMEQLKIVDVERAGKVTGSRFVFYRGAGARLERALINFMMDLHQDKNGYTEILPPLMVNRDSMTGTGQLPKFEEDAFKVEDTNYFLVPTAEVPVTNMHRDEILSADQLPIGYAAYSQCFRSEAGSAGRDTRGLIRQHQFNKVELVRFVKPEESYEQLELLTGQAEEVLKLLKLPYQVLSMCTADLGFTAAKKYDIEVWMPSQGVYREISSCSNFEDFQARRAQIRFRREANAKPEFVHTLNGSALAVGRTVAAILENYQQADGSVVIPEVLRPYMGGLEVIQG</sequence>
<feature type="chain" id="PRO_1000098068" description="Serine--tRNA ligase">
    <location>
        <begin position="1"/>
        <end position="425"/>
    </location>
</feature>
<feature type="binding site" evidence="1">
    <location>
        <begin position="231"/>
        <end position="233"/>
    </location>
    <ligand>
        <name>L-serine</name>
        <dbReference type="ChEBI" id="CHEBI:33384"/>
    </ligand>
</feature>
<feature type="binding site" evidence="1">
    <location>
        <begin position="262"/>
        <end position="264"/>
    </location>
    <ligand>
        <name>ATP</name>
        <dbReference type="ChEBI" id="CHEBI:30616"/>
    </ligand>
</feature>
<feature type="binding site" evidence="1">
    <location>
        <position position="285"/>
    </location>
    <ligand>
        <name>L-serine</name>
        <dbReference type="ChEBI" id="CHEBI:33384"/>
    </ligand>
</feature>
<feature type="binding site" evidence="1">
    <location>
        <begin position="349"/>
        <end position="352"/>
    </location>
    <ligand>
        <name>ATP</name>
        <dbReference type="ChEBI" id="CHEBI:30616"/>
    </ligand>
</feature>
<feature type="binding site" evidence="1">
    <location>
        <position position="385"/>
    </location>
    <ligand>
        <name>L-serine</name>
        <dbReference type="ChEBI" id="CHEBI:33384"/>
    </ligand>
</feature>